<organism>
    <name type="scientific">Mycobacterium sp. (strain MCS)</name>
    <dbReference type="NCBI Taxonomy" id="164756"/>
    <lineage>
        <taxon>Bacteria</taxon>
        <taxon>Bacillati</taxon>
        <taxon>Actinomycetota</taxon>
        <taxon>Actinomycetes</taxon>
        <taxon>Mycobacteriales</taxon>
        <taxon>Mycobacteriaceae</taxon>
        <taxon>Mycobacterium</taxon>
    </lineage>
</organism>
<comment type="catalytic activity">
    <reaction evidence="1">
        <text>tRNA(Cys) + L-cysteine + ATP = L-cysteinyl-tRNA(Cys) + AMP + diphosphate</text>
        <dbReference type="Rhea" id="RHEA:17773"/>
        <dbReference type="Rhea" id="RHEA-COMP:9661"/>
        <dbReference type="Rhea" id="RHEA-COMP:9679"/>
        <dbReference type="ChEBI" id="CHEBI:30616"/>
        <dbReference type="ChEBI" id="CHEBI:33019"/>
        <dbReference type="ChEBI" id="CHEBI:35235"/>
        <dbReference type="ChEBI" id="CHEBI:78442"/>
        <dbReference type="ChEBI" id="CHEBI:78517"/>
        <dbReference type="ChEBI" id="CHEBI:456215"/>
        <dbReference type="EC" id="6.1.1.16"/>
    </reaction>
</comment>
<comment type="cofactor">
    <cofactor evidence="1">
        <name>Zn(2+)</name>
        <dbReference type="ChEBI" id="CHEBI:29105"/>
    </cofactor>
    <text evidence="1">Binds 1 zinc ion per subunit.</text>
</comment>
<comment type="subunit">
    <text evidence="1">Monomer.</text>
</comment>
<comment type="subcellular location">
    <subcellularLocation>
        <location evidence="1">Cytoplasm</location>
    </subcellularLocation>
</comment>
<comment type="similarity">
    <text evidence="1">Belongs to the class-I aminoacyl-tRNA synthetase family.</text>
</comment>
<proteinExistence type="inferred from homology"/>
<name>SYC_MYCSS</name>
<evidence type="ECO:0000255" key="1">
    <source>
        <dbReference type="HAMAP-Rule" id="MF_00041"/>
    </source>
</evidence>
<reference key="1">
    <citation type="submission" date="2006-06" db="EMBL/GenBank/DDBJ databases">
        <title>Complete sequence of chromosome of Mycobacterium sp. MCS.</title>
        <authorList>
            <consortium name="US DOE Joint Genome Institute"/>
            <person name="Copeland A."/>
            <person name="Lucas S."/>
            <person name="Lapidus A."/>
            <person name="Barry K."/>
            <person name="Detter J.C."/>
            <person name="Glavina del Rio T."/>
            <person name="Hammon N."/>
            <person name="Israni S."/>
            <person name="Dalin E."/>
            <person name="Tice H."/>
            <person name="Pitluck S."/>
            <person name="Martinez M."/>
            <person name="Schmutz J."/>
            <person name="Larimer F."/>
            <person name="Land M."/>
            <person name="Hauser L."/>
            <person name="Kyrpides N."/>
            <person name="Kim E."/>
            <person name="Miller C.D."/>
            <person name="Hughes J.E."/>
            <person name="Anderson A.J."/>
            <person name="Sims R.C."/>
            <person name="Richardson P."/>
        </authorList>
    </citation>
    <scope>NUCLEOTIDE SEQUENCE [LARGE SCALE GENOMIC DNA]</scope>
    <source>
        <strain>MCS</strain>
    </source>
</reference>
<dbReference type="EC" id="6.1.1.16" evidence="1"/>
<dbReference type="EMBL" id="CP000384">
    <property type="protein sequence ID" value="ABG10841.1"/>
    <property type="molecule type" value="Genomic_DNA"/>
</dbReference>
<dbReference type="SMR" id="Q1B2P3"/>
<dbReference type="KEGG" id="mmc:Mmcs_4737"/>
<dbReference type="HOGENOM" id="CLU_013528_0_1_11"/>
<dbReference type="BioCyc" id="MSP164756:G1G6O-4839-MONOMER"/>
<dbReference type="GO" id="GO:0005829">
    <property type="term" value="C:cytosol"/>
    <property type="evidence" value="ECO:0007669"/>
    <property type="project" value="TreeGrafter"/>
</dbReference>
<dbReference type="GO" id="GO:0005524">
    <property type="term" value="F:ATP binding"/>
    <property type="evidence" value="ECO:0007669"/>
    <property type="project" value="UniProtKB-UniRule"/>
</dbReference>
<dbReference type="GO" id="GO:0004817">
    <property type="term" value="F:cysteine-tRNA ligase activity"/>
    <property type="evidence" value="ECO:0007669"/>
    <property type="project" value="UniProtKB-UniRule"/>
</dbReference>
<dbReference type="GO" id="GO:0008270">
    <property type="term" value="F:zinc ion binding"/>
    <property type="evidence" value="ECO:0007669"/>
    <property type="project" value="UniProtKB-UniRule"/>
</dbReference>
<dbReference type="GO" id="GO:0006423">
    <property type="term" value="P:cysteinyl-tRNA aminoacylation"/>
    <property type="evidence" value="ECO:0007669"/>
    <property type="project" value="UniProtKB-UniRule"/>
</dbReference>
<dbReference type="CDD" id="cd00672">
    <property type="entry name" value="CysRS_core"/>
    <property type="match status" value="1"/>
</dbReference>
<dbReference type="FunFam" id="3.40.50.620:FF:000068">
    <property type="entry name" value="Cysteine--tRNA ligase"/>
    <property type="match status" value="1"/>
</dbReference>
<dbReference type="Gene3D" id="1.20.120.1910">
    <property type="entry name" value="Cysteine-tRNA ligase, C-terminal anti-codon recognition domain"/>
    <property type="match status" value="1"/>
</dbReference>
<dbReference type="Gene3D" id="3.40.50.620">
    <property type="entry name" value="HUPs"/>
    <property type="match status" value="1"/>
</dbReference>
<dbReference type="HAMAP" id="MF_00041">
    <property type="entry name" value="Cys_tRNA_synth"/>
    <property type="match status" value="1"/>
</dbReference>
<dbReference type="InterPro" id="IPR015803">
    <property type="entry name" value="Cys-tRNA-ligase"/>
</dbReference>
<dbReference type="InterPro" id="IPR015273">
    <property type="entry name" value="Cys-tRNA-synt_Ia_DALR"/>
</dbReference>
<dbReference type="InterPro" id="IPR024909">
    <property type="entry name" value="Cys-tRNA/MSH_ligase"/>
</dbReference>
<dbReference type="InterPro" id="IPR056411">
    <property type="entry name" value="CysS_C"/>
</dbReference>
<dbReference type="InterPro" id="IPR014729">
    <property type="entry name" value="Rossmann-like_a/b/a_fold"/>
</dbReference>
<dbReference type="InterPro" id="IPR032678">
    <property type="entry name" value="tRNA-synt_1_cat_dom"/>
</dbReference>
<dbReference type="InterPro" id="IPR009080">
    <property type="entry name" value="tRNAsynth_Ia_anticodon-bd"/>
</dbReference>
<dbReference type="NCBIfam" id="TIGR00435">
    <property type="entry name" value="cysS"/>
    <property type="match status" value="1"/>
</dbReference>
<dbReference type="PANTHER" id="PTHR10890:SF30">
    <property type="entry name" value="CYSTEINE--TRNA LIGASE"/>
    <property type="match status" value="1"/>
</dbReference>
<dbReference type="PANTHER" id="PTHR10890">
    <property type="entry name" value="CYSTEINYL-TRNA SYNTHETASE"/>
    <property type="match status" value="1"/>
</dbReference>
<dbReference type="Pfam" id="PF23493">
    <property type="entry name" value="CysS_C"/>
    <property type="match status" value="1"/>
</dbReference>
<dbReference type="Pfam" id="PF01406">
    <property type="entry name" value="tRNA-synt_1e"/>
    <property type="match status" value="1"/>
</dbReference>
<dbReference type="PRINTS" id="PR00983">
    <property type="entry name" value="TRNASYNTHCYS"/>
</dbReference>
<dbReference type="SMART" id="SM00840">
    <property type="entry name" value="DALR_2"/>
    <property type="match status" value="1"/>
</dbReference>
<dbReference type="SUPFAM" id="SSF47323">
    <property type="entry name" value="Anticodon-binding domain of a subclass of class I aminoacyl-tRNA synthetases"/>
    <property type="match status" value="1"/>
</dbReference>
<dbReference type="SUPFAM" id="SSF52374">
    <property type="entry name" value="Nucleotidylyl transferase"/>
    <property type="match status" value="1"/>
</dbReference>
<feature type="chain" id="PRO_0000332857" description="Cysteine--tRNA ligase">
    <location>
        <begin position="1"/>
        <end position="481"/>
    </location>
</feature>
<feature type="short sequence motif" description="'HIGH' region">
    <location>
        <begin position="45"/>
        <end position="55"/>
    </location>
</feature>
<feature type="short sequence motif" description="'KMSKS' region">
    <location>
        <begin position="277"/>
        <end position="281"/>
    </location>
</feature>
<feature type="binding site" evidence="1">
    <location>
        <position position="43"/>
    </location>
    <ligand>
        <name>Zn(2+)</name>
        <dbReference type="ChEBI" id="CHEBI:29105"/>
    </ligand>
</feature>
<feature type="binding site" evidence="1">
    <location>
        <position position="221"/>
    </location>
    <ligand>
        <name>Zn(2+)</name>
        <dbReference type="ChEBI" id="CHEBI:29105"/>
    </ligand>
</feature>
<feature type="binding site" evidence="1">
    <location>
        <position position="246"/>
    </location>
    <ligand>
        <name>Zn(2+)</name>
        <dbReference type="ChEBI" id="CHEBI:29105"/>
    </ligand>
</feature>
<feature type="binding site" evidence="1">
    <location>
        <position position="250"/>
    </location>
    <ligand>
        <name>Zn(2+)</name>
        <dbReference type="ChEBI" id="CHEBI:29105"/>
    </ligand>
</feature>
<feature type="binding site" evidence="1">
    <location>
        <position position="280"/>
    </location>
    <ligand>
        <name>ATP</name>
        <dbReference type="ChEBI" id="CHEBI:30616"/>
    </ligand>
</feature>
<sequence>MTDRADADRPATSPTGLRLYDTMTGAVRDFVPLRDGHVSIYLCGATVQGLPHIGHVRSGVAFDVLRRWLTAKGLDVAFIRNVTDIDDKILNKAADAGRPWWEWAATYERAFSAAYDALGVLPPSAEPRATGHITQMVELIERLIDRGHAYTGDGDVYFNVATLPDYGKLSGHRIDDVHQGEGVATGKRDQRDFTLWKGAKPGEPSWPTPWGRGRPGWHTECVAMCEAYLGAEFDIHAGGMDLVFPHHENEIAQAEAAGDGFARFWLHNGWVTMGGEKMSKSLGNVLSIPAVLQRVRAAELRYYLGSAHYRSMLEFSETALQDAVKAYAGVEDFLHRVRTRVGTVVPGDWTPKFAAALDDDLSVPIALAEVHAARAVGNRALDSGDHETAMTQARSIRAMMGILGCDPLDERWESRDETSAALAAIDVLVRWALDSRADARNRKDWATADQIRDRLKEAGIEVTDTADGPQWSLLDGDSKDV</sequence>
<accession>Q1B2P3</accession>
<keyword id="KW-0030">Aminoacyl-tRNA synthetase</keyword>
<keyword id="KW-0067">ATP-binding</keyword>
<keyword id="KW-0963">Cytoplasm</keyword>
<keyword id="KW-0436">Ligase</keyword>
<keyword id="KW-0479">Metal-binding</keyword>
<keyword id="KW-0547">Nucleotide-binding</keyword>
<keyword id="KW-0648">Protein biosynthesis</keyword>
<keyword id="KW-0862">Zinc</keyword>
<gene>
    <name evidence="1" type="primary">cysS</name>
    <name type="ordered locus">Mmcs_4737</name>
</gene>
<protein>
    <recommendedName>
        <fullName evidence="1">Cysteine--tRNA ligase</fullName>
        <ecNumber evidence="1">6.1.1.16</ecNumber>
    </recommendedName>
    <alternativeName>
        <fullName evidence="1">Cysteinyl-tRNA synthetase</fullName>
        <shortName evidence="1">CysRS</shortName>
    </alternativeName>
</protein>